<protein>
    <recommendedName>
        <fullName evidence="1">Small ribosomal subunit protein eS4</fullName>
    </recommendedName>
    <alternativeName>
        <fullName>40S ribosomal protein S4</fullName>
    </alternativeName>
</protein>
<reference key="1">
    <citation type="journal article" date="2006" name="Insect Biochem. Mol. Biol.">
        <title>An annotated catalog of salivary gland transcripts from Ixodes scapularis ticks.</title>
        <authorList>
            <person name="Ribeiro J.M.C."/>
            <person name="Alarcon-Chaidez F."/>
            <person name="Francischetti I.M.B."/>
            <person name="Mans B.J."/>
            <person name="Mather T.N."/>
            <person name="Valenzuela J.G."/>
            <person name="Wikel S.K."/>
        </authorList>
    </citation>
    <scope>NUCLEOTIDE SEQUENCE [LARGE SCALE MRNA]</scope>
    <source>
        <strain>ISUFL21</strain>
        <tissue>Salivary gland</tissue>
    </source>
</reference>
<comment type="similarity">
    <text evidence="1">Belongs to the eukaryotic ribosomal protein eS4 family.</text>
</comment>
<accession>Q4PMB3</accession>
<gene>
    <name type="primary">RpS4</name>
</gene>
<proteinExistence type="evidence at transcript level"/>
<dbReference type="EMBL" id="DQ066214">
    <property type="protein sequence ID" value="AAY66851.1"/>
    <property type="molecule type" value="mRNA"/>
</dbReference>
<dbReference type="SMR" id="Q4PMB3"/>
<dbReference type="FunCoup" id="Q4PMB3">
    <property type="interactions" value="909"/>
</dbReference>
<dbReference type="EnsemblMetazoa" id="ISCI024787-RA">
    <property type="protein sequence ID" value="ISCI024787-PA"/>
    <property type="gene ID" value="ISCI024787"/>
</dbReference>
<dbReference type="EnsemblMetazoa" id="XM_029992710.3">
    <property type="protein sequence ID" value="XP_029848570.1"/>
    <property type="gene ID" value="LOC8039384"/>
</dbReference>
<dbReference type="VEuPathDB" id="VectorBase:ISCI024787"/>
<dbReference type="VEuPathDB" id="VectorBase:ISCP_026113"/>
<dbReference type="VEuPathDB" id="VectorBase:ISCW024787"/>
<dbReference type="HOGENOM" id="CLU_060400_3_0_1"/>
<dbReference type="InParanoid" id="Q4PMB3"/>
<dbReference type="OMA" id="GHIQLNL"/>
<dbReference type="OrthoDB" id="1109245at2759"/>
<dbReference type="Proteomes" id="UP000001555">
    <property type="component" value="Unplaced"/>
</dbReference>
<dbReference type="GO" id="GO:0022627">
    <property type="term" value="C:cytosolic small ribosomal subunit"/>
    <property type="evidence" value="ECO:0000318"/>
    <property type="project" value="GO_Central"/>
</dbReference>
<dbReference type="GO" id="GO:0003723">
    <property type="term" value="F:RNA binding"/>
    <property type="evidence" value="ECO:0000318"/>
    <property type="project" value="GO_Central"/>
</dbReference>
<dbReference type="GO" id="GO:0019843">
    <property type="term" value="F:rRNA binding"/>
    <property type="evidence" value="ECO:0007669"/>
    <property type="project" value="UniProtKB-KW"/>
</dbReference>
<dbReference type="GO" id="GO:0003735">
    <property type="term" value="F:structural constituent of ribosome"/>
    <property type="evidence" value="ECO:0000318"/>
    <property type="project" value="GO_Central"/>
</dbReference>
<dbReference type="GO" id="GO:0006412">
    <property type="term" value="P:translation"/>
    <property type="evidence" value="ECO:0000318"/>
    <property type="project" value="GO_Central"/>
</dbReference>
<dbReference type="CDD" id="cd06087">
    <property type="entry name" value="KOW_RPS4"/>
    <property type="match status" value="1"/>
</dbReference>
<dbReference type="CDD" id="cd00165">
    <property type="entry name" value="S4"/>
    <property type="match status" value="1"/>
</dbReference>
<dbReference type="FunFam" id="2.30.30.30:FF:000005">
    <property type="entry name" value="40S ribosomal protein S4"/>
    <property type="match status" value="1"/>
</dbReference>
<dbReference type="FunFam" id="2.40.50.740:FF:000001">
    <property type="entry name" value="40S ribosomal protein S4"/>
    <property type="match status" value="1"/>
</dbReference>
<dbReference type="FunFam" id="3.10.290.10:FF:000051">
    <property type="entry name" value="40S ribosomal protein S4, X isoform"/>
    <property type="match status" value="1"/>
</dbReference>
<dbReference type="Gene3D" id="2.30.30.30">
    <property type="match status" value="1"/>
</dbReference>
<dbReference type="Gene3D" id="2.40.50.740">
    <property type="match status" value="1"/>
</dbReference>
<dbReference type="Gene3D" id="3.10.290.10">
    <property type="entry name" value="RNA-binding S4 domain"/>
    <property type="match status" value="1"/>
</dbReference>
<dbReference type="HAMAP" id="MF_00485">
    <property type="entry name" value="Ribosomal_eS4"/>
    <property type="match status" value="1"/>
</dbReference>
<dbReference type="InterPro" id="IPR005824">
    <property type="entry name" value="KOW"/>
</dbReference>
<dbReference type="InterPro" id="IPR014722">
    <property type="entry name" value="Rib_uL2_dom2"/>
</dbReference>
<dbReference type="InterPro" id="IPR000876">
    <property type="entry name" value="Ribosomal_eS4"/>
</dbReference>
<dbReference type="InterPro" id="IPR032277">
    <property type="entry name" value="Ribosomal_eS4_C"/>
</dbReference>
<dbReference type="InterPro" id="IPR013845">
    <property type="entry name" value="Ribosomal_eS4_central_region"/>
</dbReference>
<dbReference type="InterPro" id="IPR038237">
    <property type="entry name" value="Ribosomal_eS4_central_sf"/>
</dbReference>
<dbReference type="InterPro" id="IPR041982">
    <property type="entry name" value="Ribosomal_eS4_KOW"/>
</dbReference>
<dbReference type="InterPro" id="IPR013843">
    <property type="entry name" value="Ribosomal_eS4_N"/>
</dbReference>
<dbReference type="InterPro" id="IPR018199">
    <property type="entry name" value="Ribosomal_eS4_N_CS"/>
</dbReference>
<dbReference type="InterPro" id="IPR002942">
    <property type="entry name" value="S4_RNA-bd"/>
</dbReference>
<dbReference type="InterPro" id="IPR036986">
    <property type="entry name" value="S4_RNA-bd_sf"/>
</dbReference>
<dbReference type="PANTHER" id="PTHR11581">
    <property type="entry name" value="30S/40S RIBOSOMAL PROTEIN S4"/>
    <property type="match status" value="1"/>
</dbReference>
<dbReference type="PANTHER" id="PTHR11581:SF0">
    <property type="entry name" value="SMALL RIBOSOMAL SUBUNIT PROTEIN ES4"/>
    <property type="match status" value="1"/>
</dbReference>
<dbReference type="Pfam" id="PF16121">
    <property type="entry name" value="40S_S4_C"/>
    <property type="match status" value="1"/>
</dbReference>
<dbReference type="Pfam" id="PF00467">
    <property type="entry name" value="KOW"/>
    <property type="match status" value="1"/>
</dbReference>
<dbReference type="Pfam" id="PF00900">
    <property type="entry name" value="Ribosomal_S4e"/>
    <property type="match status" value="1"/>
</dbReference>
<dbReference type="Pfam" id="PF08071">
    <property type="entry name" value="RS4NT"/>
    <property type="match status" value="1"/>
</dbReference>
<dbReference type="Pfam" id="PF01479">
    <property type="entry name" value="S4"/>
    <property type="match status" value="1"/>
</dbReference>
<dbReference type="PIRSF" id="PIRSF002116">
    <property type="entry name" value="Ribosomal_S4"/>
    <property type="match status" value="1"/>
</dbReference>
<dbReference type="SMART" id="SM00363">
    <property type="entry name" value="S4"/>
    <property type="match status" value="1"/>
</dbReference>
<dbReference type="SUPFAM" id="SSF55174">
    <property type="entry name" value="Alpha-L RNA-binding motif"/>
    <property type="match status" value="1"/>
</dbReference>
<dbReference type="PROSITE" id="PS00528">
    <property type="entry name" value="RIBOSOMAL_S4E"/>
    <property type="match status" value="1"/>
</dbReference>
<dbReference type="PROSITE" id="PS50889">
    <property type="entry name" value="S4"/>
    <property type="match status" value="1"/>
</dbReference>
<feature type="chain" id="PRO_0000260288" description="Small ribosomal subunit protein eS4">
    <location>
        <begin position="1"/>
        <end position="262"/>
    </location>
</feature>
<feature type="domain" description="S4 RNA-binding">
    <location>
        <begin position="42"/>
        <end position="105"/>
    </location>
</feature>
<keyword id="KW-1185">Reference proteome</keyword>
<keyword id="KW-0687">Ribonucleoprotein</keyword>
<keyword id="KW-0689">Ribosomal protein</keyword>
<keyword id="KW-0694">RNA-binding</keyword>
<keyword id="KW-0699">rRNA-binding</keyword>
<sequence length="262" mass="29609">MARGPKKHLKRLNAPKSWMLDKLGGVFAPRPSTGPHKLRESLPLIIMLRNRLKYALTGAEVKKIVKQRLIKVDGKVRTDTNYPAGFMDVVTIEKTGEFFRLLYDVKGRFTLHRITPEEAKYKLCRVKRVQVGPKGVPFLTTHDARTIRYPDPLIKVNDTVKVDLATGKIDDYIKFDSGNVCMVTGGHNLGRVGVITSRERHPGSFDIVHVKDSQGHSFATRLNYIFVIGKSTKPYISLPRGKGIKLSVAEERDRRLQAKSQH</sequence>
<organism>
    <name type="scientific">Ixodes scapularis</name>
    <name type="common">Black-legged tick</name>
    <name type="synonym">Deer tick</name>
    <dbReference type="NCBI Taxonomy" id="6945"/>
    <lineage>
        <taxon>Eukaryota</taxon>
        <taxon>Metazoa</taxon>
        <taxon>Ecdysozoa</taxon>
        <taxon>Arthropoda</taxon>
        <taxon>Chelicerata</taxon>
        <taxon>Arachnida</taxon>
        <taxon>Acari</taxon>
        <taxon>Parasitiformes</taxon>
        <taxon>Ixodida</taxon>
        <taxon>Ixodoidea</taxon>
        <taxon>Ixodidae</taxon>
        <taxon>Ixodinae</taxon>
        <taxon>Ixodes</taxon>
    </lineage>
</organism>
<evidence type="ECO:0000305" key="1"/>
<name>RS4_IXOSC</name>